<dbReference type="EC" id="3.4.22.-"/>
<dbReference type="EMBL" id="M97695">
    <property type="protein sequence ID" value="AAA29229.1"/>
    <property type="molecule type" value="Genomic_DNA"/>
</dbReference>
<dbReference type="PIR" id="A48566">
    <property type="entry name" value="A48566"/>
</dbReference>
<dbReference type="SMR" id="Q05094"/>
<dbReference type="MEROPS" id="C01.074"/>
<dbReference type="GlyCosmos" id="Q05094">
    <property type="glycosylation" value="2 sites, No reported glycans"/>
</dbReference>
<dbReference type="GO" id="GO:0005764">
    <property type="term" value="C:lysosome"/>
    <property type="evidence" value="ECO:0007669"/>
    <property type="project" value="UniProtKB-SubCell"/>
</dbReference>
<dbReference type="GO" id="GO:0004197">
    <property type="term" value="F:cysteine-type endopeptidase activity"/>
    <property type="evidence" value="ECO:0007669"/>
    <property type="project" value="InterPro"/>
</dbReference>
<dbReference type="GO" id="GO:0006508">
    <property type="term" value="P:proteolysis"/>
    <property type="evidence" value="ECO:0007669"/>
    <property type="project" value="UniProtKB-KW"/>
</dbReference>
<dbReference type="CDD" id="cd02248">
    <property type="entry name" value="Peptidase_C1A"/>
    <property type="match status" value="1"/>
</dbReference>
<dbReference type="FunFam" id="3.90.70.10:FF:000212">
    <property type="entry name" value="Cathepsin L-like protease"/>
    <property type="match status" value="1"/>
</dbReference>
<dbReference type="Gene3D" id="1.10.287.2250">
    <property type="match status" value="1"/>
</dbReference>
<dbReference type="Gene3D" id="3.90.70.10">
    <property type="entry name" value="Cysteine proteinases"/>
    <property type="match status" value="1"/>
</dbReference>
<dbReference type="InterPro" id="IPR021981">
    <property type="entry name" value="DUF3586"/>
</dbReference>
<dbReference type="InterPro" id="IPR038765">
    <property type="entry name" value="Papain-like_cys_pep_sf"/>
</dbReference>
<dbReference type="InterPro" id="IPR025661">
    <property type="entry name" value="Pept_asp_AS"/>
</dbReference>
<dbReference type="InterPro" id="IPR000169">
    <property type="entry name" value="Pept_cys_AS"/>
</dbReference>
<dbReference type="InterPro" id="IPR025660">
    <property type="entry name" value="Pept_his_AS"/>
</dbReference>
<dbReference type="InterPro" id="IPR013128">
    <property type="entry name" value="Peptidase_C1A"/>
</dbReference>
<dbReference type="InterPro" id="IPR000668">
    <property type="entry name" value="Peptidase_C1A_C"/>
</dbReference>
<dbReference type="InterPro" id="IPR039417">
    <property type="entry name" value="Peptidase_C1A_papain-like"/>
</dbReference>
<dbReference type="InterPro" id="IPR013201">
    <property type="entry name" value="Prot_inhib_I29"/>
</dbReference>
<dbReference type="PANTHER" id="PTHR12411">
    <property type="entry name" value="CYSTEINE PROTEASE FAMILY C1-RELATED"/>
    <property type="match status" value="1"/>
</dbReference>
<dbReference type="Pfam" id="PF12131">
    <property type="entry name" value="DUF3586"/>
    <property type="match status" value="1"/>
</dbReference>
<dbReference type="Pfam" id="PF08246">
    <property type="entry name" value="Inhibitor_I29"/>
    <property type="match status" value="1"/>
</dbReference>
<dbReference type="Pfam" id="PF00112">
    <property type="entry name" value="Peptidase_C1"/>
    <property type="match status" value="1"/>
</dbReference>
<dbReference type="PRINTS" id="PR00705">
    <property type="entry name" value="PAPAIN"/>
</dbReference>
<dbReference type="SMART" id="SM00848">
    <property type="entry name" value="Inhibitor_I29"/>
    <property type="match status" value="1"/>
</dbReference>
<dbReference type="SMART" id="SM00645">
    <property type="entry name" value="Pept_C1"/>
    <property type="match status" value="1"/>
</dbReference>
<dbReference type="SUPFAM" id="SSF54001">
    <property type="entry name" value="Cysteine proteinases"/>
    <property type="match status" value="1"/>
</dbReference>
<dbReference type="PROSITE" id="PS00640">
    <property type="entry name" value="THIOL_PROTEASE_ASN"/>
    <property type="match status" value="1"/>
</dbReference>
<dbReference type="PROSITE" id="PS00139">
    <property type="entry name" value="THIOL_PROTEASE_CYS"/>
    <property type="match status" value="1"/>
</dbReference>
<dbReference type="PROSITE" id="PS00639">
    <property type="entry name" value="THIOL_PROTEASE_HIS"/>
    <property type="match status" value="1"/>
</dbReference>
<feature type="signal peptide" description="Or 27">
    <location>
        <begin position="1"/>
        <end position="19"/>
    </location>
</feature>
<feature type="propeptide" id="PRO_0000026386" description="Activation peptide" evidence="6">
    <location>
        <begin position="20"/>
        <end position="124"/>
    </location>
</feature>
<feature type="chain" id="PRO_0000026387" description="Cysteine proteinase 2">
    <location>
        <begin position="125"/>
        <end position="444"/>
    </location>
</feature>
<feature type="active site" evidence="1">
    <location>
        <position position="150"/>
    </location>
</feature>
<feature type="active site" evidence="1">
    <location>
        <position position="289"/>
    </location>
</feature>
<feature type="active site" evidence="1">
    <location>
        <position position="309"/>
    </location>
</feature>
<feature type="glycosylation site" description="N-linked (GlcNAc...) asparagine" evidence="2">
    <location>
        <position position="228"/>
    </location>
</feature>
<feature type="glycosylation site" description="N-linked (GlcNAc...) asparagine" evidence="2">
    <location>
        <position position="372"/>
    </location>
</feature>
<feature type="disulfide bond" evidence="1">
    <location>
        <begin position="147"/>
        <end position="188"/>
    </location>
</feature>
<accession>Q05094</accession>
<gene>
    <name type="primary">CYS2</name>
</gene>
<organism>
    <name type="scientific">Leishmania pifanoi</name>
    <dbReference type="NCBI Taxonomy" id="5682"/>
    <lineage>
        <taxon>Eukaryota</taxon>
        <taxon>Discoba</taxon>
        <taxon>Euglenozoa</taxon>
        <taxon>Kinetoplastea</taxon>
        <taxon>Metakinetoplastina</taxon>
        <taxon>Trypanosomatida</taxon>
        <taxon>Trypanosomatidae</taxon>
        <taxon>Leishmaniinae</taxon>
        <taxon>Leishmania</taxon>
    </lineage>
</organism>
<protein>
    <recommendedName>
        <fullName>Cysteine proteinase 2</fullName>
        <ecNumber>3.4.22.-</ecNumber>
    </recommendedName>
    <alternativeName>
        <fullName>Amastigote cysteine proteinase A-2</fullName>
    </alternativeName>
</protein>
<name>CYSP2_LEIPI</name>
<sequence length="444" mass="47857">MATSRAALCAVAVVCVVLAAACAPARAIHVGTPAAALFEEFKRTYGRAYETLAEEQQRLANFERNLELMREHQARNPHAQFGITKFFDLSEAEFAARYLNGAAYFAAAKRHAAQHYRKARADLSAVPDAVDWREKGAVTPVKDQGACGSCWAFSAVGNIEGQWYLAGHELVSLSEQQLVSCDDMNDGCDGGLMLQAFDWLLQNTNGHLHTEDSYPYVSGNGYVPECSNSSEELVVGAQIDGHVLIGSSEKAMAAWLAKNGPIAIALDASSFMSYKSGVLTACIGKQLNHGVLLVGYDMTGEVPYWVIKNSWGGDWGEQGYVRVVMGVNACLLSEYPVSAHVRESAAPGTSTSSETPAPRPVMVEQVICFDKNCTQGCRKTLIKANECHKNGGGGASMIKCSPQKVTMCTYSNEFCVGGGLCFETPDGKCAPYFLGSIMNTCHYT</sequence>
<evidence type="ECO:0000250" key="1"/>
<evidence type="ECO:0000255" key="2"/>
<evidence type="ECO:0000255" key="3">
    <source>
        <dbReference type="PROSITE-ProRule" id="PRU10088"/>
    </source>
</evidence>
<evidence type="ECO:0000255" key="4">
    <source>
        <dbReference type="PROSITE-ProRule" id="PRU10089"/>
    </source>
</evidence>
<evidence type="ECO:0000255" key="5">
    <source>
        <dbReference type="PROSITE-ProRule" id="PRU10090"/>
    </source>
</evidence>
<evidence type="ECO:0000305" key="6">
    <source>
    </source>
</evidence>
<comment type="function">
    <text>The cysteine proteinases have a potential role in host-parasite interaction and virulence.</text>
</comment>
<comment type="subcellular location">
    <subcellularLocation>
        <location>Lysosome</location>
    </subcellularLocation>
    <text>Associated with megasome, a unique lysosomal organelle found in intracellular amastigotes of the L.mexicana complex.</text>
</comment>
<comment type="developmental stage">
    <text>Primarily expressed by the amastigote stage. Expressed 15 times more in amastigotes than in promastigotes.</text>
</comment>
<comment type="similarity">
    <text evidence="3 4 5">Belongs to the peptidase C1 family.</text>
</comment>
<reference key="1">
    <citation type="journal article" date="1993" name="Mol. Biochem. Parasitol.">
        <title>Identification of two distinct cysteine proteinase genes of Leishmania pifanoi axenic amastigotes using the polymerase chain reaction.</title>
        <authorList>
            <person name="Traub-Cseko Y.M."/>
            <person name="Duboise M."/>
            <person name="Boukai L.K."/>
            <person name="McMahon-Pratt D."/>
        </authorList>
    </citation>
    <scope>NUCLEOTIDE SEQUENCE [GENOMIC DNA]</scope>
    <scope>PROTEIN SEQUENCE OF 125-159; 237-266 AND 308-322</scope>
</reference>
<proteinExistence type="evidence at protein level"/>
<keyword id="KW-0903">Direct protein sequencing</keyword>
<keyword id="KW-1015">Disulfide bond</keyword>
<keyword id="KW-0325">Glycoprotein</keyword>
<keyword id="KW-0378">Hydrolase</keyword>
<keyword id="KW-0458">Lysosome</keyword>
<keyword id="KW-0645">Protease</keyword>
<keyword id="KW-0732">Signal</keyword>
<keyword id="KW-0788">Thiol protease</keyword>
<keyword id="KW-0843">Virulence</keyword>
<keyword id="KW-0865">Zymogen</keyword>